<gene>
    <name evidence="1" type="primary">atpB</name>
    <name type="ordered locus">Geob_0458</name>
</gene>
<proteinExistence type="inferred from homology"/>
<name>ATP6_GEODF</name>
<dbReference type="EMBL" id="CP001390">
    <property type="protein sequence ID" value="ACM18827.1"/>
    <property type="molecule type" value="Genomic_DNA"/>
</dbReference>
<dbReference type="RefSeq" id="WP_012645556.1">
    <property type="nucleotide sequence ID" value="NC_011979.1"/>
</dbReference>
<dbReference type="SMR" id="B9LZL3"/>
<dbReference type="STRING" id="316067.Geob_0458"/>
<dbReference type="KEGG" id="geo:Geob_0458"/>
<dbReference type="eggNOG" id="COG0356">
    <property type="taxonomic scope" value="Bacteria"/>
</dbReference>
<dbReference type="HOGENOM" id="CLU_041018_2_2_7"/>
<dbReference type="OrthoDB" id="9789241at2"/>
<dbReference type="Proteomes" id="UP000007721">
    <property type="component" value="Chromosome"/>
</dbReference>
<dbReference type="GO" id="GO:0005886">
    <property type="term" value="C:plasma membrane"/>
    <property type="evidence" value="ECO:0007669"/>
    <property type="project" value="UniProtKB-SubCell"/>
</dbReference>
<dbReference type="GO" id="GO:0045259">
    <property type="term" value="C:proton-transporting ATP synthase complex"/>
    <property type="evidence" value="ECO:0007669"/>
    <property type="project" value="UniProtKB-KW"/>
</dbReference>
<dbReference type="GO" id="GO:0046933">
    <property type="term" value="F:proton-transporting ATP synthase activity, rotational mechanism"/>
    <property type="evidence" value="ECO:0007669"/>
    <property type="project" value="UniProtKB-UniRule"/>
</dbReference>
<dbReference type="GO" id="GO:0042777">
    <property type="term" value="P:proton motive force-driven plasma membrane ATP synthesis"/>
    <property type="evidence" value="ECO:0007669"/>
    <property type="project" value="TreeGrafter"/>
</dbReference>
<dbReference type="CDD" id="cd00310">
    <property type="entry name" value="ATP-synt_Fo_a_6"/>
    <property type="match status" value="1"/>
</dbReference>
<dbReference type="FunFam" id="1.20.120.220:FF:000006">
    <property type="entry name" value="ATP synthase subunit a"/>
    <property type="match status" value="1"/>
</dbReference>
<dbReference type="Gene3D" id="1.20.120.220">
    <property type="entry name" value="ATP synthase, F0 complex, subunit A"/>
    <property type="match status" value="1"/>
</dbReference>
<dbReference type="HAMAP" id="MF_01393">
    <property type="entry name" value="ATP_synth_a_bact"/>
    <property type="match status" value="1"/>
</dbReference>
<dbReference type="InterPro" id="IPR045082">
    <property type="entry name" value="ATP_syn_F0_a_bact/chloroplast"/>
</dbReference>
<dbReference type="InterPro" id="IPR000568">
    <property type="entry name" value="ATP_synth_F0_asu"/>
</dbReference>
<dbReference type="InterPro" id="IPR023011">
    <property type="entry name" value="ATP_synth_F0_asu_AS"/>
</dbReference>
<dbReference type="InterPro" id="IPR035908">
    <property type="entry name" value="F0_ATP_A_sf"/>
</dbReference>
<dbReference type="NCBIfam" id="TIGR01131">
    <property type="entry name" value="ATP_synt_6_or_A"/>
    <property type="match status" value="1"/>
</dbReference>
<dbReference type="PANTHER" id="PTHR42823">
    <property type="entry name" value="ATP SYNTHASE SUBUNIT A, CHLOROPLASTIC"/>
    <property type="match status" value="1"/>
</dbReference>
<dbReference type="PANTHER" id="PTHR42823:SF3">
    <property type="entry name" value="ATP SYNTHASE SUBUNIT A, CHLOROPLASTIC"/>
    <property type="match status" value="1"/>
</dbReference>
<dbReference type="Pfam" id="PF00119">
    <property type="entry name" value="ATP-synt_A"/>
    <property type="match status" value="1"/>
</dbReference>
<dbReference type="PRINTS" id="PR00123">
    <property type="entry name" value="ATPASEA"/>
</dbReference>
<dbReference type="SUPFAM" id="SSF81336">
    <property type="entry name" value="F1F0 ATP synthase subunit A"/>
    <property type="match status" value="1"/>
</dbReference>
<dbReference type="PROSITE" id="PS00449">
    <property type="entry name" value="ATPASE_A"/>
    <property type="match status" value="1"/>
</dbReference>
<accession>B9LZL3</accession>
<organism>
    <name type="scientific">Geotalea daltonii (strain DSM 22248 / JCM 15807 / FRC-32)</name>
    <name type="common">Geobacter daltonii</name>
    <dbReference type="NCBI Taxonomy" id="316067"/>
    <lineage>
        <taxon>Bacteria</taxon>
        <taxon>Pseudomonadati</taxon>
        <taxon>Thermodesulfobacteriota</taxon>
        <taxon>Desulfuromonadia</taxon>
        <taxon>Geobacterales</taxon>
        <taxon>Geobacteraceae</taxon>
        <taxon>Geotalea</taxon>
    </lineage>
</organism>
<comment type="function">
    <text evidence="1">Key component of the proton channel; it plays a direct role in the translocation of protons across the membrane.</text>
</comment>
<comment type="subunit">
    <text evidence="1">F-type ATPases have 2 components, CF(1) - the catalytic core - and CF(0) - the membrane proton channel. CF(1) has five subunits: alpha(3), beta(3), gamma(1), delta(1), epsilon(1). CF(0) has three main subunits: a(1), b(2) and c(9-12). The alpha and beta chains form an alternating ring which encloses part of the gamma chain. CF(1) is attached to CF(0) by a central stalk formed by the gamma and epsilon chains, while a peripheral stalk is formed by the delta and b chains.</text>
</comment>
<comment type="subcellular location">
    <subcellularLocation>
        <location evidence="1">Cell inner membrane</location>
        <topology evidence="1">Multi-pass membrane protein</topology>
    </subcellularLocation>
</comment>
<comment type="similarity">
    <text evidence="1">Belongs to the ATPase A chain family.</text>
</comment>
<feature type="chain" id="PRO_1000184283" description="ATP synthase subunit a">
    <location>
        <begin position="1"/>
        <end position="229"/>
    </location>
</feature>
<feature type="transmembrane region" description="Helical" evidence="1">
    <location>
        <begin position="25"/>
        <end position="45"/>
    </location>
</feature>
<feature type="transmembrane region" description="Helical" evidence="1">
    <location>
        <begin position="82"/>
        <end position="102"/>
    </location>
</feature>
<feature type="transmembrane region" description="Helical" evidence="1">
    <location>
        <begin position="111"/>
        <end position="131"/>
    </location>
</feature>
<feature type="transmembrane region" description="Helical" evidence="1">
    <location>
        <begin position="142"/>
        <end position="162"/>
    </location>
</feature>
<feature type="transmembrane region" description="Helical" evidence="1">
    <location>
        <begin position="181"/>
        <end position="201"/>
    </location>
</feature>
<feature type="transmembrane region" description="Helical" evidence="1">
    <location>
        <begin position="202"/>
        <end position="222"/>
    </location>
</feature>
<evidence type="ECO:0000255" key="1">
    <source>
        <dbReference type="HAMAP-Rule" id="MF_01393"/>
    </source>
</evidence>
<sequence>MVHPFLFLQFFRHLLTPLGISEGGADAIAYTWLIIALLLIVSILATKGLKSVPGKMQNFMEVIIGGIENMVVETMGEHGKPFFPLIATLALFILVSNLIGLIPGFFPPTANINTTAACAVIVFVTTHIVGIKEHGVKYIKHFLGPILWLAPMMFFIEVIGHFSRVISLTLRLFGNMNGHELVLMIFFGLAPFLVPLPMMLMGVLVSFIQAFVFMLLAMIYIQGSLEEGH</sequence>
<reference key="1">
    <citation type="submission" date="2009-01" db="EMBL/GenBank/DDBJ databases">
        <title>Complete sequence of Geobacter sp. FRC-32.</title>
        <authorList>
            <consortium name="US DOE Joint Genome Institute"/>
            <person name="Lucas S."/>
            <person name="Copeland A."/>
            <person name="Lapidus A."/>
            <person name="Glavina del Rio T."/>
            <person name="Dalin E."/>
            <person name="Tice H."/>
            <person name="Bruce D."/>
            <person name="Goodwin L."/>
            <person name="Pitluck S."/>
            <person name="Saunders E."/>
            <person name="Brettin T."/>
            <person name="Detter J.C."/>
            <person name="Han C."/>
            <person name="Larimer F."/>
            <person name="Land M."/>
            <person name="Hauser L."/>
            <person name="Kyrpides N."/>
            <person name="Ovchinnikova G."/>
            <person name="Kostka J."/>
            <person name="Richardson P."/>
        </authorList>
    </citation>
    <scope>NUCLEOTIDE SEQUENCE [LARGE SCALE GENOMIC DNA]</scope>
    <source>
        <strain>DSM 22248 / JCM 15807 / FRC-32</strain>
    </source>
</reference>
<keyword id="KW-0066">ATP synthesis</keyword>
<keyword id="KW-0997">Cell inner membrane</keyword>
<keyword id="KW-1003">Cell membrane</keyword>
<keyword id="KW-0138">CF(0)</keyword>
<keyword id="KW-0375">Hydrogen ion transport</keyword>
<keyword id="KW-0406">Ion transport</keyword>
<keyword id="KW-0472">Membrane</keyword>
<keyword id="KW-1185">Reference proteome</keyword>
<keyword id="KW-0812">Transmembrane</keyword>
<keyword id="KW-1133">Transmembrane helix</keyword>
<keyword id="KW-0813">Transport</keyword>
<protein>
    <recommendedName>
        <fullName evidence="1">ATP synthase subunit a</fullName>
    </recommendedName>
    <alternativeName>
        <fullName evidence="1">ATP synthase F0 sector subunit a</fullName>
    </alternativeName>
    <alternativeName>
        <fullName evidence="1">F-ATPase subunit 6</fullName>
    </alternativeName>
</protein>